<sequence>MSAEGVEKLSLEIAASEEESVAPTEQQDVACGLENLPVSLWPLGAEPRPKPFQYTPDHVAGPGADIDPTQITFPGCACIETPCVPGTCSCLRHENNYDDNLCLRDVGSEGKYAKPVFECNVLCQCGMRCRNRVVQNGLHFLLQVFQTEKKGWGLRTLEFIPKGRFVCEYAGEVLGFSEVQRRIHLQTSHDSNYIIAVREHIYSGQIMETFVDPTYIGNIGRFLNHSCEPNLLMIPVRIDSMVPKLALFAAKDILPGEELSYDYSGRFLNQVSSKDKEKIDCSPPRKPCYCGAQSCTTFLPYDSSLYMAP</sequence>
<organism>
    <name type="scientific">Mus musculus</name>
    <name type="common">Mouse</name>
    <dbReference type="NCBI Taxonomy" id="10090"/>
    <lineage>
        <taxon>Eukaryota</taxon>
        <taxon>Metazoa</taxon>
        <taxon>Chordata</taxon>
        <taxon>Craniata</taxon>
        <taxon>Vertebrata</taxon>
        <taxon>Euteleostomi</taxon>
        <taxon>Mammalia</taxon>
        <taxon>Eutheria</taxon>
        <taxon>Euarchontoglires</taxon>
        <taxon>Glires</taxon>
        <taxon>Rodentia</taxon>
        <taxon>Myomorpha</taxon>
        <taxon>Muroidea</taxon>
        <taxon>Muridae</taxon>
        <taxon>Murinae</taxon>
        <taxon>Mus</taxon>
        <taxon>Mus</taxon>
    </lineage>
</organism>
<gene>
    <name evidence="6" type="primary">Setmar</name>
</gene>
<keyword id="KW-0156">Chromatin regulator</keyword>
<keyword id="KW-0158">Chromosome</keyword>
<keyword id="KW-0479">Metal-binding</keyword>
<keyword id="KW-0489">Methyltransferase</keyword>
<keyword id="KW-0539">Nucleus</keyword>
<keyword id="KW-1185">Reference proteome</keyword>
<keyword id="KW-0949">S-adenosyl-L-methionine</keyword>
<keyword id="KW-0808">Transferase</keyword>
<keyword id="KW-0862">Zinc</keyword>
<evidence type="ECO:0000250" key="1">
    <source>
        <dbReference type="UniProtKB" id="Q53H47"/>
    </source>
</evidence>
<evidence type="ECO:0000255" key="2">
    <source>
        <dbReference type="PROSITE-ProRule" id="PRU00155"/>
    </source>
</evidence>
<evidence type="ECO:0000255" key="3">
    <source>
        <dbReference type="PROSITE-ProRule" id="PRU00157"/>
    </source>
</evidence>
<evidence type="ECO:0000255" key="4">
    <source>
        <dbReference type="PROSITE-ProRule" id="PRU00190"/>
    </source>
</evidence>
<evidence type="ECO:0000305" key="5"/>
<evidence type="ECO:0000312" key="6">
    <source>
        <dbReference type="MGI" id="MGI:1921979"/>
    </source>
</evidence>
<comment type="function">
    <text evidence="1">Histone methyltransferase that methylates 'Lys-4' and 'Lys-36' of histone H3, 2 specific tags for epigenetic transcriptional activation. Specifically mediates dimethylation of H3 'Lys-36'.</text>
</comment>
<comment type="catalytic activity">
    <reaction evidence="1">
        <text>L-lysyl(36)-[histone H3] + 2 S-adenosyl-L-methionine = N(6),N(6)-dimethyl-L-lysyl(36)-[histone H3] + 2 S-adenosyl-L-homocysteine + 2 H(+)</text>
        <dbReference type="Rhea" id="RHEA:60308"/>
        <dbReference type="Rhea" id="RHEA-COMP:9785"/>
        <dbReference type="Rhea" id="RHEA-COMP:9787"/>
        <dbReference type="ChEBI" id="CHEBI:15378"/>
        <dbReference type="ChEBI" id="CHEBI:29969"/>
        <dbReference type="ChEBI" id="CHEBI:57856"/>
        <dbReference type="ChEBI" id="CHEBI:59789"/>
        <dbReference type="ChEBI" id="CHEBI:61976"/>
        <dbReference type="EC" id="2.1.1.357"/>
    </reaction>
</comment>
<comment type="subcellular location">
    <subcellularLocation>
        <location evidence="1">Nucleus</location>
    </subcellularLocation>
    <subcellularLocation>
        <location evidence="1">Chromosome</location>
    </subcellularLocation>
</comment>
<comment type="domain">
    <text evidence="1">In the pre-SET domain, Cys residues bind 3 zinc ions that are arranged in a triangular cluster; some of these Cys residues contribute to the binding of two zinc ions within the cluster.</text>
</comment>
<comment type="similarity">
    <text evidence="4">Belongs to the class V-like SAM-binding methyltransferase superfamily.</text>
</comment>
<name>SETMR_MOUSE</name>
<proteinExistence type="evidence at transcript level"/>
<accession>Q80UJ9</accession>
<accession>E9QLD6</accession>
<reference key="1">
    <citation type="journal article" date="2009" name="PLoS Biol.">
        <title>Lineage-specific biology revealed by a finished genome assembly of the mouse.</title>
        <authorList>
            <person name="Church D.M."/>
            <person name="Goodstadt L."/>
            <person name="Hillier L.W."/>
            <person name="Zody M.C."/>
            <person name="Goldstein S."/>
            <person name="She X."/>
            <person name="Bult C.J."/>
            <person name="Agarwala R."/>
            <person name="Cherry J.L."/>
            <person name="DiCuccio M."/>
            <person name="Hlavina W."/>
            <person name="Kapustin Y."/>
            <person name="Meric P."/>
            <person name="Maglott D."/>
            <person name="Birtle Z."/>
            <person name="Marques A.C."/>
            <person name="Graves T."/>
            <person name="Zhou S."/>
            <person name="Teague B."/>
            <person name="Potamousis K."/>
            <person name="Churas C."/>
            <person name="Place M."/>
            <person name="Herschleb J."/>
            <person name="Runnheim R."/>
            <person name="Forrest D."/>
            <person name="Amos-Landgraf J."/>
            <person name="Schwartz D.C."/>
            <person name="Cheng Z."/>
            <person name="Lindblad-Toh K."/>
            <person name="Eichler E.E."/>
            <person name="Ponting C.P."/>
        </authorList>
    </citation>
    <scope>NUCLEOTIDE SEQUENCE [LARGE SCALE GENOMIC DNA]</scope>
    <source>
        <strain>C57BL/6J</strain>
    </source>
</reference>
<reference key="2">
    <citation type="journal article" date="2004" name="Genome Res.">
        <title>The status, quality, and expansion of the NIH full-length cDNA project: the Mammalian Gene Collection (MGC).</title>
        <authorList>
            <consortium name="The MGC Project Team"/>
        </authorList>
    </citation>
    <scope>NUCLEOTIDE SEQUENCE [LARGE SCALE MRNA]</scope>
    <source>
        <strain>Czech II</strain>
        <tissue>Mammary tumor</tissue>
    </source>
</reference>
<feature type="chain" id="PRO_0000259527" description="Histone-lysine N-methyltransferase SETMAR">
    <location>
        <begin position="1"/>
        <end position="309"/>
    </location>
</feature>
<feature type="domain" description="Pre-SET" evidence="3">
    <location>
        <begin position="74"/>
        <end position="137"/>
    </location>
</feature>
<feature type="domain" description="SET" evidence="4">
    <location>
        <begin position="140"/>
        <end position="264"/>
    </location>
</feature>
<feature type="domain" description="Post-SET" evidence="2">
    <location>
        <begin position="284"/>
        <end position="300"/>
    </location>
</feature>
<feature type="binding site" evidence="1">
    <location>
        <position position="76"/>
    </location>
    <ligand>
        <name>Zn(2+)</name>
        <dbReference type="ChEBI" id="CHEBI:29105"/>
        <label>1</label>
    </ligand>
</feature>
<feature type="binding site" evidence="1">
    <location>
        <position position="76"/>
    </location>
    <ligand>
        <name>Zn(2+)</name>
        <dbReference type="ChEBI" id="CHEBI:29105"/>
        <label>2</label>
    </ligand>
</feature>
<feature type="binding site" evidence="1">
    <location>
        <position position="78"/>
    </location>
    <ligand>
        <name>Zn(2+)</name>
        <dbReference type="ChEBI" id="CHEBI:29105"/>
        <label>1</label>
    </ligand>
</feature>
<feature type="binding site" evidence="1">
    <location>
        <position position="83"/>
    </location>
    <ligand>
        <name>Zn(2+)</name>
        <dbReference type="ChEBI" id="CHEBI:29105"/>
        <label>1</label>
    </ligand>
</feature>
<feature type="binding site" evidence="1">
    <location>
        <position position="83"/>
    </location>
    <ligand>
        <name>Zn(2+)</name>
        <dbReference type="ChEBI" id="CHEBI:29105"/>
        <label>3</label>
    </ligand>
</feature>
<feature type="binding site" evidence="1">
    <location>
        <position position="88"/>
    </location>
    <ligand>
        <name>Zn(2+)</name>
        <dbReference type="ChEBI" id="CHEBI:29105"/>
        <label>1</label>
    </ligand>
</feature>
<feature type="binding site" evidence="1">
    <location>
        <position position="90"/>
    </location>
    <ligand>
        <name>Zn(2+)</name>
        <dbReference type="ChEBI" id="CHEBI:29105"/>
        <label>2</label>
    </ligand>
</feature>
<feature type="binding site" evidence="1">
    <location>
        <position position="119"/>
    </location>
    <ligand>
        <name>Zn(2+)</name>
        <dbReference type="ChEBI" id="CHEBI:29105"/>
        <label>2</label>
    </ligand>
</feature>
<feature type="binding site" evidence="1">
    <location>
        <position position="119"/>
    </location>
    <ligand>
        <name>Zn(2+)</name>
        <dbReference type="ChEBI" id="CHEBI:29105"/>
        <label>3</label>
    </ligand>
</feature>
<feature type="binding site" evidence="1">
    <location>
        <position position="123"/>
    </location>
    <ligand>
        <name>Zn(2+)</name>
        <dbReference type="ChEBI" id="CHEBI:29105"/>
        <label>2</label>
    </ligand>
</feature>
<feature type="binding site" evidence="1">
    <location>
        <position position="125"/>
    </location>
    <ligand>
        <name>Zn(2+)</name>
        <dbReference type="ChEBI" id="CHEBI:29105"/>
        <label>3</label>
    </ligand>
</feature>
<feature type="binding site" evidence="1">
    <location>
        <position position="129"/>
    </location>
    <ligand>
        <name>Zn(2+)</name>
        <dbReference type="ChEBI" id="CHEBI:29105"/>
        <label>3</label>
    </ligand>
</feature>
<feature type="binding site" evidence="1">
    <location>
        <begin position="150"/>
        <end position="152"/>
    </location>
    <ligand>
        <name>S-adenosyl-L-methionine</name>
        <dbReference type="ChEBI" id="CHEBI:59789"/>
    </ligand>
</feature>
<feature type="binding site" evidence="4">
    <location>
        <position position="193"/>
    </location>
    <ligand>
        <name>S-adenosyl-L-methionine</name>
        <dbReference type="ChEBI" id="CHEBI:59789"/>
    </ligand>
</feature>
<feature type="binding site" evidence="4">
    <location>
        <position position="221"/>
    </location>
    <ligand>
        <name>S-adenosyl-L-methionine</name>
        <dbReference type="ChEBI" id="CHEBI:59789"/>
    </ligand>
</feature>
<feature type="binding site" evidence="1">
    <location>
        <begin position="224"/>
        <end position="225"/>
    </location>
    <ligand>
        <name>S-adenosyl-L-methionine</name>
        <dbReference type="ChEBI" id="CHEBI:59789"/>
    </ligand>
</feature>
<feature type="binding site" evidence="1">
    <location>
        <position position="227"/>
    </location>
    <ligand>
        <name>Zn(2+)</name>
        <dbReference type="ChEBI" id="CHEBI:29105"/>
        <label>4</label>
    </ligand>
</feature>
<feature type="binding site" evidence="1">
    <location>
        <position position="288"/>
    </location>
    <ligand>
        <name>Zn(2+)</name>
        <dbReference type="ChEBI" id="CHEBI:29105"/>
        <label>4</label>
    </ligand>
</feature>
<feature type="binding site" evidence="1">
    <location>
        <position position="290"/>
    </location>
    <ligand>
        <name>Zn(2+)</name>
        <dbReference type="ChEBI" id="CHEBI:29105"/>
        <label>4</label>
    </ligand>
</feature>
<feature type="binding site" evidence="1">
    <location>
        <position position="295"/>
    </location>
    <ligand>
        <name>Zn(2+)</name>
        <dbReference type="ChEBI" id="CHEBI:29105"/>
        <label>4</label>
    </ligand>
</feature>
<feature type="sequence conflict" description="In Ref. 2; AAH45208." evidence="5" ref="2">
    <original>L</original>
    <variation>F</variation>
    <location>
        <position position="103"/>
    </location>
</feature>
<feature type="sequence conflict" description="In Ref. 2; AAH45208." evidence="5" ref="2">
    <original>S</original>
    <variation>R</variation>
    <location>
        <position position="273"/>
    </location>
</feature>
<dbReference type="EC" id="2.1.1.357" evidence="1"/>
<dbReference type="EMBL" id="AC153916">
    <property type="status" value="NOT_ANNOTATED_CDS"/>
    <property type="molecule type" value="Genomic_DNA"/>
</dbReference>
<dbReference type="EMBL" id="BC045208">
    <property type="protein sequence ID" value="AAH45208.1"/>
    <property type="molecule type" value="mRNA"/>
</dbReference>
<dbReference type="CCDS" id="CCDS51867.1"/>
<dbReference type="RefSeq" id="NP_848478.2">
    <property type="nucleotide sequence ID" value="NM_178391.4"/>
</dbReference>
<dbReference type="SMR" id="Q80UJ9"/>
<dbReference type="FunCoup" id="Q80UJ9">
    <property type="interactions" value="273"/>
</dbReference>
<dbReference type="STRING" id="10090.ENSMUSP00000048225"/>
<dbReference type="iPTMnet" id="Q80UJ9"/>
<dbReference type="PhosphoSitePlus" id="Q80UJ9"/>
<dbReference type="PaxDb" id="10090-ENSMUSP00000048225"/>
<dbReference type="ProteomicsDB" id="256971"/>
<dbReference type="DNASU" id="74729"/>
<dbReference type="Ensembl" id="ENSMUST00000049246.7">
    <property type="protein sequence ID" value="ENSMUSP00000048225.6"/>
    <property type="gene ID" value="ENSMUSG00000034639.8"/>
</dbReference>
<dbReference type="GeneID" id="74729"/>
<dbReference type="KEGG" id="mmu:74729"/>
<dbReference type="UCSC" id="uc009dde.3">
    <property type="organism name" value="mouse"/>
</dbReference>
<dbReference type="AGR" id="MGI:1921979"/>
<dbReference type="CTD" id="6419"/>
<dbReference type="MGI" id="MGI:1921979">
    <property type="gene designation" value="Setmar"/>
</dbReference>
<dbReference type="VEuPathDB" id="HostDB:ENSMUSG00000034639"/>
<dbReference type="eggNOG" id="KOG1082">
    <property type="taxonomic scope" value="Eukaryota"/>
</dbReference>
<dbReference type="GeneTree" id="ENSGT00940000162663"/>
<dbReference type="HOGENOM" id="CLU_020840_3_3_1"/>
<dbReference type="InParanoid" id="Q80UJ9"/>
<dbReference type="OMA" id="VDSMVPK"/>
<dbReference type="OrthoDB" id="616263at2759"/>
<dbReference type="PhylomeDB" id="Q80UJ9"/>
<dbReference type="TreeFam" id="TF316038"/>
<dbReference type="BioGRID-ORCS" id="74729">
    <property type="hits" value="1 hit in 79 CRISPR screens"/>
</dbReference>
<dbReference type="PRO" id="PR:Q80UJ9"/>
<dbReference type="Proteomes" id="UP000000589">
    <property type="component" value="Chromosome 6"/>
</dbReference>
<dbReference type="RNAct" id="Q80UJ9">
    <property type="molecule type" value="protein"/>
</dbReference>
<dbReference type="Bgee" id="ENSMUSG00000034639">
    <property type="expression patterns" value="Expressed in ear vesicle and 215 other cell types or tissues"/>
</dbReference>
<dbReference type="ExpressionAtlas" id="Q80UJ9">
    <property type="expression patterns" value="baseline and differential"/>
</dbReference>
<dbReference type="GO" id="GO:0005694">
    <property type="term" value="C:chromosome"/>
    <property type="evidence" value="ECO:0007669"/>
    <property type="project" value="UniProtKB-SubCell"/>
</dbReference>
<dbReference type="GO" id="GO:0005634">
    <property type="term" value="C:nucleus"/>
    <property type="evidence" value="ECO:0007669"/>
    <property type="project" value="UniProtKB-SubCell"/>
</dbReference>
<dbReference type="GO" id="GO:0140954">
    <property type="term" value="F:histone H3K36 dimethyltransferase activity"/>
    <property type="evidence" value="ECO:0000250"/>
    <property type="project" value="UniProtKB"/>
</dbReference>
<dbReference type="GO" id="GO:0042800">
    <property type="term" value="F:histone H3K4 methyltransferase activity"/>
    <property type="evidence" value="ECO:0000250"/>
    <property type="project" value="UniProtKB"/>
</dbReference>
<dbReference type="GO" id="GO:0008270">
    <property type="term" value="F:zinc ion binding"/>
    <property type="evidence" value="ECO:0007669"/>
    <property type="project" value="InterPro"/>
</dbReference>
<dbReference type="GO" id="GO:0032259">
    <property type="term" value="P:methylation"/>
    <property type="evidence" value="ECO:0007669"/>
    <property type="project" value="UniProtKB-KW"/>
</dbReference>
<dbReference type="GO" id="GO:0045892">
    <property type="term" value="P:negative regulation of DNA-templated transcription"/>
    <property type="evidence" value="ECO:0007669"/>
    <property type="project" value="UniProtKB-ARBA"/>
</dbReference>
<dbReference type="GO" id="GO:0045814">
    <property type="term" value="P:negative regulation of gene expression, epigenetic"/>
    <property type="evidence" value="ECO:0007669"/>
    <property type="project" value="UniProtKB-ARBA"/>
</dbReference>
<dbReference type="CDD" id="cd10544">
    <property type="entry name" value="SET_SETMAR"/>
    <property type="match status" value="1"/>
</dbReference>
<dbReference type="FunFam" id="2.170.270.10:FF:000041">
    <property type="entry name" value="Histone-lysine N-methyltransferase SETMAR"/>
    <property type="match status" value="1"/>
</dbReference>
<dbReference type="Gene3D" id="2.170.270.10">
    <property type="entry name" value="SET domain"/>
    <property type="match status" value="1"/>
</dbReference>
<dbReference type="InterPro" id="IPR050973">
    <property type="entry name" value="H3K9_Histone-Lys_N-MTase"/>
</dbReference>
<dbReference type="InterPro" id="IPR003616">
    <property type="entry name" value="Post-SET_dom"/>
</dbReference>
<dbReference type="InterPro" id="IPR007728">
    <property type="entry name" value="Pre-SET_dom"/>
</dbReference>
<dbReference type="InterPro" id="IPR001214">
    <property type="entry name" value="SET_dom"/>
</dbReference>
<dbReference type="InterPro" id="IPR046341">
    <property type="entry name" value="SET_dom_sf"/>
</dbReference>
<dbReference type="PANTHER" id="PTHR46223:SF3">
    <property type="entry name" value="HISTONE-LYSINE N-METHYLTRANSFERASE SET-23"/>
    <property type="match status" value="1"/>
</dbReference>
<dbReference type="PANTHER" id="PTHR46223">
    <property type="entry name" value="HISTONE-LYSINE N-METHYLTRANSFERASE SUV39H"/>
    <property type="match status" value="1"/>
</dbReference>
<dbReference type="Pfam" id="PF05033">
    <property type="entry name" value="Pre-SET"/>
    <property type="match status" value="1"/>
</dbReference>
<dbReference type="Pfam" id="PF00856">
    <property type="entry name" value="SET"/>
    <property type="match status" value="1"/>
</dbReference>
<dbReference type="SMART" id="SM00468">
    <property type="entry name" value="PreSET"/>
    <property type="match status" value="1"/>
</dbReference>
<dbReference type="SMART" id="SM00317">
    <property type="entry name" value="SET"/>
    <property type="match status" value="1"/>
</dbReference>
<dbReference type="SUPFAM" id="SSF82199">
    <property type="entry name" value="SET domain"/>
    <property type="match status" value="1"/>
</dbReference>
<dbReference type="PROSITE" id="PS50868">
    <property type="entry name" value="POST_SET"/>
    <property type="match status" value="1"/>
</dbReference>
<dbReference type="PROSITE" id="PS50867">
    <property type="entry name" value="PRE_SET"/>
    <property type="match status" value="1"/>
</dbReference>
<dbReference type="PROSITE" id="PS50280">
    <property type="entry name" value="SET"/>
    <property type="match status" value="1"/>
</dbReference>
<protein>
    <recommendedName>
        <fullName evidence="5">Histone-lysine N-methyltransferase SETMAR</fullName>
        <ecNumber evidence="1">2.1.1.357</ecNumber>
    </recommendedName>
    <alternativeName>
        <fullName evidence="6">SET domain without mariner transposase fusion protein</fullName>
    </alternativeName>
</protein>